<protein>
    <recommendedName>
        <fullName evidence="1">Phosphatidylglycerol--prolipoprotein diacylglyceryl transferase</fullName>
        <ecNumber evidence="1">2.5.1.145</ecNumber>
    </recommendedName>
</protein>
<sequence length="270" mass="30581">MQSNYFSFPQFDPVIFEIGPIGLRWYGLMYLLGFLFARWLAVKRANQTGSGWTTDQVDSLLFNGFMGVFLGGRIGYVLFYQFDYFLQDPAYLFRVWEGGMSFHGGLIGVILAMLITAKIQKRGFWQTADFVAPLIPFGLGMGRIGNFINDELWGRVTDVPWAVLFPSGGYLPRHPSQLYEAVLEGIVLFFILNWYIKKPRPIGATAGLFLLGYGIFRFIVEFFREPDAQLGLYFGQHISMGQILSTPMILIGAVIMLVAYQSAGKKREIL</sequence>
<feature type="chain" id="PRO_0000172646" description="Phosphatidylglycerol--prolipoprotein diacylglyceryl transferase">
    <location>
        <begin position="1"/>
        <end position="270"/>
    </location>
</feature>
<feature type="transmembrane region" description="Helical" evidence="1">
    <location>
        <begin position="14"/>
        <end position="34"/>
    </location>
</feature>
<feature type="transmembrane region" description="Helical" evidence="1">
    <location>
        <begin position="60"/>
        <end position="80"/>
    </location>
</feature>
<feature type="transmembrane region" description="Helical" evidence="1">
    <location>
        <begin position="95"/>
        <end position="115"/>
    </location>
</feature>
<feature type="transmembrane region" description="Helical" evidence="1">
    <location>
        <begin position="128"/>
        <end position="148"/>
    </location>
</feature>
<feature type="transmembrane region" description="Helical" evidence="1">
    <location>
        <begin position="176"/>
        <end position="196"/>
    </location>
</feature>
<feature type="transmembrane region" description="Helical" evidence="1">
    <location>
        <begin position="202"/>
        <end position="222"/>
    </location>
</feature>
<feature type="transmembrane region" description="Helical" evidence="1">
    <location>
        <begin position="238"/>
        <end position="258"/>
    </location>
</feature>
<feature type="binding site" evidence="1">
    <location>
        <position position="143"/>
    </location>
    <ligand>
        <name>a 1,2-diacyl-sn-glycero-3-phospho-(1'-sn-glycerol)</name>
        <dbReference type="ChEBI" id="CHEBI:64716"/>
    </ligand>
</feature>
<dbReference type="EC" id="2.5.1.145" evidence="1"/>
<dbReference type="EMBL" id="AE004439">
    <property type="protein sequence ID" value="AAK02164.1"/>
    <property type="molecule type" value="Genomic_DNA"/>
</dbReference>
<dbReference type="RefSeq" id="WP_010906471.1">
    <property type="nucleotide sequence ID" value="NC_002663.1"/>
</dbReference>
<dbReference type="SMR" id="Q9CPG2"/>
<dbReference type="STRING" id="272843.PM0080"/>
<dbReference type="EnsemblBacteria" id="AAK02164">
    <property type="protein sequence ID" value="AAK02164"/>
    <property type="gene ID" value="PM0080"/>
</dbReference>
<dbReference type="KEGG" id="pmu:PM0080"/>
<dbReference type="PATRIC" id="fig|272843.6.peg.82"/>
<dbReference type="HOGENOM" id="CLU_013386_1_0_6"/>
<dbReference type="OrthoDB" id="871140at2"/>
<dbReference type="UniPathway" id="UPA00664"/>
<dbReference type="Proteomes" id="UP000000809">
    <property type="component" value="Chromosome"/>
</dbReference>
<dbReference type="GO" id="GO:0005886">
    <property type="term" value="C:plasma membrane"/>
    <property type="evidence" value="ECO:0007669"/>
    <property type="project" value="UniProtKB-SubCell"/>
</dbReference>
<dbReference type="GO" id="GO:0008961">
    <property type="term" value="F:phosphatidylglycerol-prolipoprotein diacylglyceryl transferase activity"/>
    <property type="evidence" value="ECO:0007669"/>
    <property type="project" value="UniProtKB-UniRule"/>
</dbReference>
<dbReference type="GO" id="GO:0042158">
    <property type="term" value="P:lipoprotein biosynthetic process"/>
    <property type="evidence" value="ECO:0007669"/>
    <property type="project" value="UniProtKB-UniRule"/>
</dbReference>
<dbReference type="HAMAP" id="MF_01147">
    <property type="entry name" value="Lgt"/>
    <property type="match status" value="1"/>
</dbReference>
<dbReference type="InterPro" id="IPR001640">
    <property type="entry name" value="Lgt"/>
</dbReference>
<dbReference type="NCBIfam" id="TIGR00544">
    <property type="entry name" value="lgt"/>
    <property type="match status" value="1"/>
</dbReference>
<dbReference type="PANTHER" id="PTHR30589:SF0">
    <property type="entry name" value="PHOSPHATIDYLGLYCEROL--PROLIPOPROTEIN DIACYLGLYCERYL TRANSFERASE"/>
    <property type="match status" value="1"/>
</dbReference>
<dbReference type="PANTHER" id="PTHR30589">
    <property type="entry name" value="PROLIPOPROTEIN DIACYLGLYCERYL TRANSFERASE"/>
    <property type="match status" value="1"/>
</dbReference>
<dbReference type="Pfam" id="PF01790">
    <property type="entry name" value="LGT"/>
    <property type="match status" value="1"/>
</dbReference>
<dbReference type="PROSITE" id="PS01311">
    <property type="entry name" value="LGT"/>
    <property type="match status" value="1"/>
</dbReference>
<gene>
    <name evidence="1" type="primary">lgt</name>
    <name type="ordered locus">PM0080</name>
</gene>
<reference key="1">
    <citation type="journal article" date="2001" name="Proc. Natl. Acad. Sci. U.S.A.">
        <title>Complete genomic sequence of Pasteurella multocida Pm70.</title>
        <authorList>
            <person name="May B.J."/>
            <person name="Zhang Q."/>
            <person name="Li L.L."/>
            <person name="Paustian M.L."/>
            <person name="Whittam T.S."/>
            <person name="Kapur V."/>
        </authorList>
    </citation>
    <scope>NUCLEOTIDE SEQUENCE [LARGE SCALE GENOMIC DNA]</scope>
    <source>
        <strain>Pm70</strain>
    </source>
</reference>
<evidence type="ECO:0000255" key="1">
    <source>
        <dbReference type="HAMAP-Rule" id="MF_01147"/>
    </source>
</evidence>
<name>LGT_PASMU</name>
<accession>Q9CPG2</accession>
<comment type="function">
    <text evidence="1">Catalyzes the transfer of the diacylglyceryl group from phosphatidylglycerol to the sulfhydryl group of the N-terminal cysteine of a prolipoprotein, the first step in the formation of mature lipoproteins.</text>
</comment>
<comment type="catalytic activity">
    <reaction evidence="1">
        <text>L-cysteinyl-[prolipoprotein] + a 1,2-diacyl-sn-glycero-3-phospho-(1'-sn-glycerol) = an S-1,2-diacyl-sn-glyceryl-L-cysteinyl-[prolipoprotein] + sn-glycerol 1-phosphate + H(+)</text>
        <dbReference type="Rhea" id="RHEA:56712"/>
        <dbReference type="Rhea" id="RHEA-COMP:14679"/>
        <dbReference type="Rhea" id="RHEA-COMP:14680"/>
        <dbReference type="ChEBI" id="CHEBI:15378"/>
        <dbReference type="ChEBI" id="CHEBI:29950"/>
        <dbReference type="ChEBI" id="CHEBI:57685"/>
        <dbReference type="ChEBI" id="CHEBI:64716"/>
        <dbReference type="ChEBI" id="CHEBI:140658"/>
        <dbReference type="EC" id="2.5.1.145"/>
    </reaction>
</comment>
<comment type="pathway">
    <text evidence="1">Protein modification; lipoprotein biosynthesis (diacylglyceryl transfer).</text>
</comment>
<comment type="subcellular location">
    <subcellularLocation>
        <location evidence="1">Cell inner membrane</location>
        <topology evidence="1">Multi-pass membrane protein</topology>
    </subcellularLocation>
</comment>
<comment type="similarity">
    <text evidence="1">Belongs to the Lgt family.</text>
</comment>
<organism>
    <name type="scientific">Pasteurella multocida (strain Pm70)</name>
    <dbReference type="NCBI Taxonomy" id="272843"/>
    <lineage>
        <taxon>Bacteria</taxon>
        <taxon>Pseudomonadati</taxon>
        <taxon>Pseudomonadota</taxon>
        <taxon>Gammaproteobacteria</taxon>
        <taxon>Pasteurellales</taxon>
        <taxon>Pasteurellaceae</taxon>
        <taxon>Pasteurella</taxon>
    </lineage>
</organism>
<proteinExistence type="inferred from homology"/>
<keyword id="KW-0997">Cell inner membrane</keyword>
<keyword id="KW-1003">Cell membrane</keyword>
<keyword id="KW-0472">Membrane</keyword>
<keyword id="KW-1185">Reference proteome</keyword>
<keyword id="KW-0808">Transferase</keyword>
<keyword id="KW-0812">Transmembrane</keyword>
<keyword id="KW-1133">Transmembrane helix</keyword>